<sequence length="971" mass="104250">MASNNVAQFAAELKMPAGVLLEQLQAAGVQKASEDDALSETDKARLLDHLRKSHGATDGDKRKITLTRKHTSEIKQSDATGKARTIQVEVRKKRTFVKRDDVAEGADQGQAQVAEADDDAELKRREEEARREAELLEKQAQELRERQERLEREEAERRAREEAAEAERRRAEEEAATKRAAAEAAAAQQQAAAQQAAAEQEATPTQSAQDEARAAAERAAQREAAKKAEDAAREAADKARAEQEEISKRRAAAEAEARAIREMMNTPRKAVVKAVEPPKPVEPPKPAEAKGTLHKPAKPEGAQARPAVKKPAGAAAPATTQAPAGAGDRNKKPGAGKGGWQDDAAKRRGIKTRGDSSGGVDRGWRGGPKGRGRHQDSSTFQAPTEPIVREVHVPETVSVADLAHKMSIKASEVIKVMMKMGQMVTINQVLDQETAMIIVEELGHRAVAAKLDDPEALLVEGESGTDAEQLPRPPVVTVMGHVDHGKTSLLDHIRRAKVAAGEAGGITQHIGAYHVDTPRGVITFLDTPGHEAFTAMRARGAKATDIVVLVVAADDGVMPQTKEAIAHAKAGGVPIVVAINKIDKPEANPDRVKQELVAEGVVPEEYGGDSPFVPVSAKTGAGIDDLLENVLLQAEVLELKAPVEAPAKGIVIEAKLDKGKGPVATILVQSGTLNRGDIVLAGTAYGRVRAMLDENGKPTKEAGPSIPVEIQGLSEVPGAGEEVIVLPDERKAREIALFRQGKFRDVKLAKQQAAKLESMLEQMGEGEVQNLPLIIKADVQGSQEALVQSLLKLSTDEVRVQIVHSAVGGISENDVNLATASKAVIIGFNTRADAQARKLAEANGIDIRYYNIIYDAVDEVKAAMSGMLAPEKREVITGMVEVRQVFKVPKIGTVAGCMVTDGIVKRSSSVRVLRNNVVIFTGELESLKRFKDDVKEVKQGFECGMSVKNFNDVTEGDQFEVFEVTEVARTL</sequence>
<evidence type="ECO:0000250" key="1"/>
<evidence type="ECO:0000255" key="2">
    <source>
        <dbReference type="HAMAP-Rule" id="MF_00100"/>
    </source>
</evidence>
<evidence type="ECO:0000256" key="3">
    <source>
        <dbReference type="SAM" id="MobiDB-lite"/>
    </source>
</evidence>
<reference key="1">
    <citation type="submission" date="2008-02" db="EMBL/GenBank/DDBJ databases">
        <title>Complete sequence of chromosome 1 of Burkholderia cenocepacia MC0-3.</title>
        <authorList>
            <person name="Copeland A."/>
            <person name="Lucas S."/>
            <person name="Lapidus A."/>
            <person name="Barry K."/>
            <person name="Bruce D."/>
            <person name="Goodwin L."/>
            <person name="Glavina del Rio T."/>
            <person name="Dalin E."/>
            <person name="Tice H."/>
            <person name="Pitluck S."/>
            <person name="Chain P."/>
            <person name="Malfatti S."/>
            <person name="Shin M."/>
            <person name="Vergez L."/>
            <person name="Schmutz J."/>
            <person name="Larimer F."/>
            <person name="Land M."/>
            <person name="Hauser L."/>
            <person name="Kyrpides N."/>
            <person name="Mikhailova N."/>
            <person name="Tiedje J."/>
            <person name="Richardson P."/>
        </authorList>
    </citation>
    <scope>NUCLEOTIDE SEQUENCE [LARGE SCALE GENOMIC DNA]</scope>
    <source>
        <strain>MC0-3</strain>
    </source>
</reference>
<gene>
    <name evidence="2" type="primary">infB</name>
    <name type="ordered locus">Bcenmc03_1476</name>
</gene>
<proteinExistence type="inferred from homology"/>
<comment type="function">
    <text evidence="2">One of the essential components for the initiation of protein synthesis. Protects formylmethionyl-tRNA from spontaneous hydrolysis and promotes its binding to the 30S ribosomal subunits. Also involved in the hydrolysis of GTP during the formation of the 70S ribosomal complex.</text>
</comment>
<comment type="subcellular location">
    <subcellularLocation>
        <location evidence="2">Cytoplasm</location>
    </subcellularLocation>
</comment>
<comment type="similarity">
    <text evidence="2">Belongs to the TRAFAC class translation factor GTPase superfamily. Classic translation factor GTPase family. IF-2 subfamily.</text>
</comment>
<name>IF2_BURO0</name>
<organism>
    <name type="scientific">Burkholderia orbicola (strain MC0-3)</name>
    <dbReference type="NCBI Taxonomy" id="406425"/>
    <lineage>
        <taxon>Bacteria</taxon>
        <taxon>Pseudomonadati</taxon>
        <taxon>Pseudomonadota</taxon>
        <taxon>Betaproteobacteria</taxon>
        <taxon>Burkholderiales</taxon>
        <taxon>Burkholderiaceae</taxon>
        <taxon>Burkholderia</taxon>
        <taxon>Burkholderia cepacia complex</taxon>
        <taxon>Burkholderia orbicola</taxon>
    </lineage>
</organism>
<keyword id="KW-0963">Cytoplasm</keyword>
<keyword id="KW-0342">GTP-binding</keyword>
<keyword id="KW-0396">Initiation factor</keyword>
<keyword id="KW-0547">Nucleotide-binding</keyword>
<keyword id="KW-0648">Protein biosynthesis</keyword>
<accession>B1K0M0</accession>
<feature type="chain" id="PRO_1000093762" description="Translation initiation factor IF-2">
    <location>
        <begin position="1"/>
        <end position="971"/>
    </location>
</feature>
<feature type="domain" description="tr-type G">
    <location>
        <begin position="471"/>
        <end position="640"/>
    </location>
</feature>
<feature type="region of interest" description="Disordered" evidence="3">
    <location>
        <begin position="48"/>
        <end position="86"/>
    </location>
</feature>
<feature type="region of interest" description="Disordered" evidence="3">
    <location>
        <begin position="101"/>
        <end position="381"/>
    </location>
</feature>
<feature type="region of interest" description="G1" evidence="1">
    <location>
        <begin position="480"/>
        <end position="487"/>
    </location>
</feature>
<feature type="region of interest" description="G2" evidence="1">
    <location>
        <begin position="505"/>
        <end position="509"/>
    </location>
</feature>
<feature type="region of interest" description="G3" evidence="1">
    <location>
        <begin position="526"/>
        <end position="529"/>
    </location>
</feature>
<feature type="region of interest" description="G4" evidence="1">
    <location>
        <begin position="580"/>
        <end position="583"/>
    </location>
</feature>
<feature type="region of interest" description="G5" evidence="1">
    <location>
        <begin position="616"/>
        <end position="618"/>
    </location>
</feature>
<feature type="compositionally biased region" description="Basic and acidic residues" evidence="3">
    <location>
        <begin position="48"/>
        <end position="63"/>
    </location>
</feature>
<feature type="compositionally biased region" description="Low complexity" evidence="3">
    <location>
        <begin position="105"/>
        <end position="114"/>
    </location>
</feature>
<feature type="compositionally biased region" description="Basic and acidic residues" evidence="3">
    <location>
        <begin position="121"/>
        <end position="181"/>
    </location>
</feature>
<feature type="compositionally biased region" description="Low complexity" evidence="3">
    <location>
        <begin position="182"/>
        <end position="203"/>
    </location>
</feature>
<feature type="compositionally biased region" description="Basic and acidic residues" evidence="3">
    <location>
        <begin position="210"/>
        <end position="261"/>
    </location>
</feature>
<feature type="compositionally biased region" description="Pro residues" evidence="3">
    <location>
        <begin position="277"/>
        <end position="286"/>
    </location>
</feature>
<feature type="compositionally biased region" description="Low complexity" evidence="3">
    <location>
        <begin position="304"/>
        <end position="326"/>
    </location>
</feature>
<feature type="compositionally biased region" description="Gly residues" evidence="3">
    <location>
        <begin position="356"/>
        <end position="369"/>
    </location>
</feature>
<feature type="binding site" evidence="2">
    <location>
        <begin position="480"/>
        <end position="487"/>
    </location>
    <ligand>
        <name>GTP</name>
        <dbReference type="ChEBI" id="CHEBI:37565"/>
    </ligand>
</feature>
<feature type="binding site" evidence="2">
    <location>
        <begin position="526"/>
        <end position="530"/>
    </location>
    <ligand>
        <name>GTP</name>
        <dbReference type="ChEBI" id="CHEBI:37565"/>
    </ligand>
</feature>
<feature type="binding site" evidence="2">
    <location>
        <begin position="580"/>
        <end position="583"/>
    </location>
    <ligand>
        <name>GTP</name>
        <dbReference type="ChEBI" id="CHEBI:37565"/>
    </ligand>
</feature>
<dbReference type="EMBL" id="CP000958">
    <property type="protein sequence ID" value="ACA90651.1"/>
    <property type="molecule type" value="Genomic_DNA"/>
</dbReference>
<dbReference type="RefSeq" id="WP_012328382.1">
    <property type="nucleotide sequence ID" value="NC_010508.1"/>
</dbReference>
<dbReference type="SMR" id="B1K0M0"/>
<dbReference type="GeneID" id="83048272"/>
<dbReference type="KEGG" id="bcm:Bcenmc03_1476"/>
<dbReference type="HOGENOM" id="CLU_006301_6_0_4"/>
<dbReference type="Proteomes" id="UP000002169">
    <property type="component" value="Chromosome 1"/>
</dbReference>
<dbReference type="GO" id="GO:0005829">
    <property type="term" value="C:cytosol"/>
    <property type="evidence" value="ECO:0007669"/>
    <property type="project" value="TreeGrafter"/>
</dbReference>
<dbReference type="GO" id="GO:0005525">
    <property type="term" value="F:GTP binding"/>
    <property type="evidence" value="ECO:0007669"/>
    <property type="project" value="UniProtKB-KW"/>
</dbReference>
<dbReference type="GO" id="GO:0003924">
    <property type="term" value="F:GTPase activity"/>
    <property type="evidence" value="ECO:0007669"/>
    <property type="project" value="UniProtKB-UniRule"/>
</dbReference>
<dbReference type="GO" id="GO:0003743">
    <property type="term" value="F:translation initiation factor activity"/>
    <property type="evidence" value="ECO:0007669"/>
    <property type="project" value="UniProtKB-UniRule"/>
</dbReference>
<dbReference type="CDD" id="cd01887">
    <property type="entry name" value="IF2_eIF5B"/>
    <property type="match status" value="1"/>
</dbReference>
<dbReference type="CDD" id="cd03702">
    <property type="entry name" value="IF2_mtIF2_II"/>
    <property type="match status" value="1"/>
</dbReference>
<dbReference type="CDD" id="cd03692">
    <property type="entry name" value="mtIF2_IVc"/>
    <property type="match status" value="1"/>
</dbReference>
<dbReference type="FunFam" id="2.40.30.10:FF:000007">
    <property type="entry name" value="Translation initiation factor IF-2"/>
    <property type="match status" value="1"/>
</dbReference>
<dbReference type="FunFam" id="2.40.30.10:FF:000008">
    <property type="entry name" value="Translation initiation factor IF-2"/>
    <property type="match status" value="1"/>
</dbReference>
<dbReference type="FunFam" id="3.40.50.10050:FF:000001">
    <property type="entry name" value="Translation initiation factor IF-2"/>
    <property type="match status" value="1"/>
</dbReference>
<dbReference type="FunFam" id="3.40.50.300:FF:000019">
    <property type="entry name" value="Translation initiation factor IF-2"/>
    <property type="match status" value="1"/>
</dbReference>
<dbReference type="Gene3D" id="3.40.50.300">
    <property type="entry name" value="P-loop containing nucleotide triphosphate hydrolases"/>
    <property type="match status" value="1"/>
</dbReference>
<dbReference type="Gene3D" id="3.30.56.50">
    <property type="entry name" value="Putative DNA-binding domain, N-terminal subdomain of bacterial translation initiation factor IF2"/>
    <property type="match status" value="1"/>
</dbReference>
<dbReference type="Gene3D" id="2.40.30.10">
    <property type="entry name" value="Translation factors"/>
    <property type="match status" value="2"/>
</dbReference>
<dbReference type="Gene3D" id="3.40.50.10050">
    <property type="entry name" value="Translation initiation factor IF- 2, domain 3"/>
    <property type="match status" value="1"/>
</dbReference>
<dbReference type="HAMAP" id="MF_00100_B">
    <property type="entry name" value="IF_2_B"/>
    <property type="match status" value="1"/>
</dbReference>
<dbReference type="InterPro" id="IPR009061">
    <property type="entry name" value="DNA-bd_dom_put_sf"/>
</dbReference>
<dbReference type="InterPro" id="IPR053905">
    <property type="entry name" value="EF-G-like_DII"/>
</dbReference>
<dbReference type="InterPro" id="IPR013575">
    <property type="entry name" value="IF2_assoc_dom_bac"/>
</dbReference>
<dbReference type="InterPro" id="IPR044145">
    <property type="entry name" value="IF2_II"/>
</dbReference>
<dbReference type="InterPro" id="IPR006847">
    <property type="entry name" value="IF2_N"/>
</dbReference>
<dbReference type="InterPro" id="IPR027417">
    <property type="entry name" value="P-loop_NTPase"/>
</dbReference>
<dbReference type="InterPro" id="IPR005225">
    <property type="entry name" value="Small_GTP-bd"/>
</dbReference>
<dbReference type="InterPro" id="IPR000795">
    <property type="entry name" value="T_Tr_GTP-bd_dom"/>
</dbReference>
<dbReference type="InterPro" id="IPR000178">
    <property type="entry name" value="TF_IF2_bacterial-like"/>
</dbReference>
<dbReference type="InterPro" id="IPR015760">
    <property type="entry name" value="TIF_IF2"/>
</dbReference>
<dbReference type="InterPro" id="IPR023115">
    <property type="entry name" value="TIF_IF2_dom3"/>
</dbReference>
<dbReference type="InterPro" id="IPR036925">
    <property type="entry name" value="TIF_IF2_dom3_sf"/>
</dbReference>
<dbReference type="InterPro" id="IPR009000">
    <property type="entry name" value="Transl_B-barrel_sf"/>
</dbReference>
<dbReference type="NCBIfam" id="TIGR00487">
    <property type="entry name" value="IF-2"/>
    <property type="match status" value="1"/>
</dbReference>
<dbReference type="NCBIfam" id="TIGR00231">
    <property type="entry name" value="small_GTP"/>
    <property type="match status" value="1"/>
</dbReference>
<dbReference type="PANTHER" id="PTHR43381:SF5">
    <property type="entry name" value="TR-TYPE G DOMAIN-CONTAINING PROTEIN"/>
    <property type="match status" value="1"/>
</dbReference>
<dbReference type="PANTHER" id="PTHR43381">
    <property type="entry name" value="TRANSLATION INITIATION FACTOR IF-2-RELATED"/>
    <property type="match status" value="1"/>
</dbReference>
<dbReference type="Pfam" id="PF22042">
    <property type="entry name" value="EF-G_D2"/>
    <property type="match status" value="1"/>
</dbReference>
<dbReference type="Pfam" id="PF00009">
    <property type="entry name" value="GTP_EFTU"/>
    <property type="match status" value="1"/>
</dbReference>
<dbReference type="Pfam" id="PF11987">
    <property type="entry name" value="IF-2"/>
    <property type="match status" value="1"/>
</dbReference>
<dbReference type="Pfam" id="PF08364">
    <property type="entry name" value="IF2_assoc"/>
    <property type="match status" value="1"/>
</dbReference>
<dbReference type="Pfam" id="PF04760">
    <property type="entry name" value="IF2_N"/>
    <property type="match status" value="2"/>
</dbReference>
<dbReference type="SUPFAM" id="SSF52156">
    <property type="entry name" value="Initiation factor IF2/eIF5b, domain 3"/>
    <property type="match status" value="1"/>
</dbReference>
<dbReference type="SUPFAM" id="SSF52540">
    <property type="entry name" value="P-loop containing nucleoside triphosphate hydrolases"/>
    <property type="match status" value="1"/>
</dbReference>
<dbReference type="SUPFAM" id="SSF46955">
    <property type="entry name" value="Putative DNA-binding domain"/>
    <property type="match status" value="1"/>
</dbReference>
<dbReference type="SUPFAM" id="SSF50447">
    <property type="entry name" value="Translation proteins"/>
    <property type="match status" value="2"/>
</dbReference>
<dbReference type="PROSITE" id="PS51722">
    <property type="entry name" value="G_TR_2"/>
    <property type="match status" value="1"/>
</dbReference>
<dbReference type="PROSITE" id="PS01176">
    <property type="entry name" value="IF2"/>
    <property type="match status" value="1"/>
</dbReference>
<protein>
    <recommendedName>
        <fullName evidence="2">Translation initiation factor IF-2</fullName>
    </recommendedName>
</protein>